<accession>O83242</accession>
<protein>
    <recommendedName>
        <fullName evidence="1">DNA-directed RNA polymerase subunit alpha</fullName>
        <shortName evidence="1">RNAP subunit alpha</shortName>
        <ecNumber evidence="1">2.7.7.6</ecNumber>
    </recommendedName>
    <alternativeName>
        <fullName evidence="1">RNA polymerase subunit alpha</fullName>
    </alternativeName>
    <alternativeName>
        <fullName evidence="1">Transcriptase subunit alpha</fullName>
    </alternativeName>
</protein>
<reference key="1">
    <citation type="journal article" date="1998" name="Science">
        <title>Complete genome sequence of Treponema pallidum, the syphilis spirochete.</title>
        <authorList>
            <person name="Fraser C.M."/>
            <person name="Norris S.J."/>
            <person name="Weinstock G.M."/>
            <person name="White O."/>
            <person name="Sutton G.G."/>
            <person name="Dodson R.J."/>
            <person name="Gwinn M.L."/>
            <person name="Hickey E.K."/>
            <person name="Clayton R.A."/>
            <person name="Ketchum K.A."/>
            <person name="Sodergren E."/>
            <person name="Hardham J.M."/>
            <person name="McLeod M.P."/>
            <person name="Salzberg S.L."/>
            <person name="Peterson J.D."/>
            <person name="Khalak H.G."/>
            <person name="Richardson D.L."/>
            <person name="Howell J.K."/>
            <person name="Chidambaram M."/>
            <person name="Utterback T.R."/>
            <person name="McDonald L.A."/>
            <person name="Artiach P."/>
            <person name="Bowman C."/>
            <person name="Cotton M.D."/>
            <person name="Fujii C."/>
            <person name="Garland S.A."/>
            <person name="Hatch B."/>
            <person name="Horst K."/>
            <person name="Roberts K.M."/>
            <person name="Sandusky M."/>
            <person name="Weidman J.F."/>
            <person name="Smith H.O."/>
            <person name="Venter J.C."/>
        </authorList>
    </citation>
    <scope>NUCLEOTIDE SEQUENCE [LARGE SCALE GENOMIC DNA]</scope>
    <source>
        <strain>Nichols</strain>
    </source>
</reference>
<proteinExistence type="inferred from homology"/>
<organism>
    <name type="scientific">Treponema pallidum (strain Nichols)</name>
    <dbReference type="NCBI Taxonomy" id="243276"/>
    <lineage>
        <taxon>Bacteria</taxon>
        <taxon>Pseudomonadati</taxon>
        <taxon>Spirochaetota</taxon>
        <taxon>Spirochaetia</taxon>
        <taxon>Spirochaetales</taxon>
        <taxon>Treponemataceae</taxon>
        <taxon>Treponema</taxon>
    </lineage>
</organism>
<evidence type="ECO:0000255" key="1">
    <source>
        <dbReference type="HAMAP-Rule" id="MF_00059"/>
    </source>
</evidence>
<gene>
    <name evidence="1" type="primary">rpoA</name>
    <name type="ordered locus">TP_0212</name>
</gene>
<name>RPOA_TREPA</name>
<comment type="function">
    <text evidence="1">DNA-dependent RNA polymerase catalyzes the transcription of DNA into RNA using the four ribonucleoside triphosphates as substrates.</text>
</comment>
<comment type="catalytic activity">
    <reaction evidence="1">
        <text>RNA(n) + a ribonucleoside 5'-triphosphate = RNA(n+1) + diphosphate</text>
        <dbReference type="Rhea" id="RHEA:21248"/>
        <dbReference type="Rhea" id="RHEA-COMP:14527"/>
        <dbReference type="Rhea" id="RHEA-COMP:17342"/>
        <dbReference type="ChEBI" id="CHEBI:33019"/>
        <dbReference type="ChEBI" id="CHEBI:61557"/>
        <dbReference type="ChEBI" id="CHEBI:140395"/>
        <dbReference type="EC" id="2.7.7.6"/>
    </reaction>
</comment>
<comment type="subunit">
    <text evidence="1">Homodimer. The RNAP catalytic core consists of 2 alpha, 1 beta, 1 beta' and 1 omega subunit. When a sigma factor is associated with the core the holoenzyme is formed, which can initiate transcription.</text>
</comment>
<comment type="domain">
    <text evidence="1">The N-terminal domain is essential for RNAP assembly and basal transcription, whereas the C-terminal domain is involved in interaction with transcriptional regulators and with upstream promoter elements.</text>
</comment>
<comment type="similarity">
    <text evidence="1">Belongs to the RNA polymerase alpha chain family.</text>
</comment>
<feature type="chain" id="PRO_0000175412" description="DNA-directed RNA polymerase subunit alpha">
    <location>
        <begin position="1"/>
        <end position="351"/>
    </location>
</feature>
<feature type="region of interest" description="Alpha N-terminal domain (alpha-NTD)" evidence="1">
    <location>
        <begin position="1"/>
        <end position="245"/>
    </location>
</feature>
<feature type="region of interest" description="Alpha C-terminal domain (alpha-CTD)" evidence="1">
    <location>
        <begin position="261"/>
        <end position="351"/>
    </location>
</feature>
<sequence length="351" mass="39545">MPRRNLLKGFKRPKVLEFLSENSSECYGKFTASPFETGFGTTVGNCLRRVLLSSIQGYAVTGVRITSFDADGVAHFISSEFEQIPHVREDTLEILNNFKRLRFLLPQGAESSTFTYEFRGAVSLTGKDFAKKFQLEVLSQDLLIMEMMDGAHVEVELHVEFGRGYVPAESHDRYADLVGVIPVDAIFSPVLRVRYDIQSCRVGQRGDYDQLSLEVWTDGTVRPEDAIAEAAKIIKEHFTVFVNFDETALDLEDEPEEDDPAVLELLNTKIADVDFSVRARNCLLTMGIKTLGELTRISEQTLANTRNVGKKSLSEIQGKLQEYNLRLGMADYNHVGVVSRLMRQKEEIDEA</sequence>
<keyword id="KW-0240">DNA-directed RNA polymerase</keyword>
<keyword id="KW-0548">Nucleotidyltransferase</keyword>
<keyword id="KW-1185">Reference proteome</keyword>
<keyword id="KW-0804">Transcription</keyword>
<keyword id="KW-0808">Transferase</keyword>
<dbReference type="EC" id="2.7.7.6" evidence="1"/>
<dbReference type="EMBL" id="AE000520">
    <property type="protein sequence ID" value="AAC65201.1"/>
    <property type="molecule type" value="Genomic_DNA"/>
</dbReference>
<dbReference type="PIR" id="B71352">
    <property type="entry name" value="B71352"/>
</dbReference>
<dbReference type="RefSeq" id="WP_010881660.1">
    <property type="nucleotide sequence ID" value="NC_021490.2"/>
</dbReference>
<dbReference type="SMR" id="O83242"/>
<dbReference type="IntAct" id="O83242">
    <property type="interactions" value="3"/>
</dbReference>
<dbReference type="STRING" id="243276.TP_0212"/>
<dbReference type="EnsemblBacteria" id="AAC65201">
    <property type="protein sequence ID" value="AAC65201"/>
    <property type="gene ID" value="TP_0212"/>
</dbReference>
<dbReference type="GeneID" id="93876000"/>
<dbReference type="KEGG" id="tpa:TP_0212"/>
<dbReference type="KEGG" id="tpw:TPANIC_0212"/>
<dbReference type="eggNOG" id="COG0202">
    <property type="taxonomic scope" value="Bacteria"/>
</dbReference>
<dbReference type="HOGENOM" id="CLU_053084_0_1_12"/>
<dbReference type="OrthoDB" id="9805706at2"/>
<dbReference type="Proteomes" id="UP000000811">
    <property type="component" value="Chromosome"/>
</dbReference>
<dbReference type="GO" id="GO:0005737">
    <property type="term" value="C:cytoplasm"/>
    <property type="evidence" value="ECO:0007669"/>
    <property type="project" value="UniProtKB-ARBA"/>
</dbReference>
<dbReference type="GO" id="GO:0000428">
    <property type="term" value="C:DNA-directed RNA polymerase complex"/>
    <property type="evidence" value="ECO:0007669"/>
    <property type="project" value="UniProtKB-KW"/>
</dbReference>
<dbReference type="GO" id="GO:0003677">
    <property type="term" value="F:DNA binding"/>
    <property type="evidence" value="ECO:0007669"/>
    <property type="project" value="UniProtKB-UniRule"/>
</dbReference>
<dbReference type="GO" id="GO:0003899">
    <property type="term" value="F:DNA-directed RNA polymerase activity"/>
    <property type="evidence" value="ECO:0007669"/>
    <property type="project" value="UniProtKB-UniRule"/>
</dbReference>
<dbReference type="GO" id="GO:0046983">
    <property type="term" value="F:protein dimerization activity"/>
    <property type="evidence" value="ECO:0007669"/>
    <property type="project" value="InterPro"/>
</dbReference>
<dbReference type="GO" id="GO:0006351">
    <property type="term" value="P:DNA-templated transcription"/>
    <property type="evidence" value="ECO:0007669"/>
    <property type="project" value="UniProtKB-UniRule"/>
</dbReference>
<dbReference type="CDD" id="cd06928">
    <property type="entry name" value="RNAP_alpha_NTD"/>
    <property type="match status" value="1"/>
</dbReference>
<dbReference type="Gene3D" id="1.10.150.20">
    <property type="entry name" value="5' to 3' exonuclease, C-terminal subdomain"/>
    <property type="match status" value="1"/>
</dbReference>
<dbReference type="Gene3D" id="2.170.120.12">
    <property type="entry name" value="DNA-directed RNA polymerase, insert domain"/>
    <property type="match status" value="1"/>
</dbReference>
<dbReference type="Gene3D" id="3.30.1360.10">
    <property type="entry name" value="RNA polymerase, RBP11-like subunit"/>
    <property type="match status" value="1"/>
</dbReference>
<dbReference type="HAMAP" id="MF_00059">
    <property type="entry name" value="RNApol_bact_RpoA"/>
    <property type="match status" value="1"/>
</dbReference>
<dbReference type="InterPro" id="IPR011262">
    <property type="entry name" value="DNA-dir_RNA_pol_insert"/>
</dbReference>
<dbReference type="InterPro" id="IPR011263">
    <property type="entry name" value="DNA-dir_RNA_pol_RpoA/D/Rpb3"/>
</dbReference>
<dbReference type="InterPro" id="IPR011773">
    <property type="entry name" value="DNA-dir_RpoA"/>
</dbReference>
<dbReference type="InterPro" id="IPR036603">
    <property type="entry name" value="RBP11-like"/>
</dbReference>
<dbReference type="InterPro" id="IPR011260">
    <property type="entry name" value="RNAP_asu_C"/>
</dbReference>
<dbReference type="InterPro" id="IPR036643">
    <property type="entry name" value="RNApol_insert_sf"/>
</dbReference>
<dbReference type="NCBIfam" id="NF003513">
    <property type="entry name" value="PRK05182.1-2"/>
    <property type="match status" value="1"/>
</dbReference>
<dbReference type="NCBIfam" id="NF003519">
    <property type="entry name" value="PRK05182.2-5"/>
    <property type="match status" value="1"/>
</dbReference>
<dbReference type="NCBIfam" id="TIGR02027">
    <property type="entry name" value="rpoA"/>
    <property type="match status" value="1"/>
</dbReference>
<dbReference type="Pfam" id="PF01000">
    <property type="entry name" value="RNA_pol_A_bac"/>
    <property type="match status" value="1"/>
</dbReference>
<dbReference type="Pfam" id="PF03118">
    <property type="entry name" value="RNA_pol_A_CTD"/>
    <property type="match status" value="1"/>
</dbReference>
<dbReference type="Pfam" id="PF01193">
    <property type="entry name" value="RNA_pol_L"/>
    <property type="match status" value="1"/>
</dbReference>
<dbReference type="SMART" id="SM00662">
    <property type="entry name" value="RPOLD"/>
    <property type="match status" value="1"/>
</dbReference>
<dbReference type="SUPFAM" id="SSF47789">
    <property type="entry name" value="C-terminal domain of RNA polymerase alpha subunit"/>
    <property type="match status" value="1"/>
</dbReference>
<dbReference type="SUPFAM" id="SSF56553">
    <property type="entry name" value="Insert subdomain of RNA polymerase alpha subunit"/>
    <property type="match status" value="1"/>
</dbReference>
<dbReference type="SUPFAM" id="SSF55257">
    <property type="entry name" value="RBP11-like subunits of RNA polymerase"/>
    <property type="match status" value="1"/>
</dbReference>